<gene>
    <name evidence="1" type="primary">lpxA</name>
    <name type="ordered locus">RBE_1187</name>
</gene>
<keyword id="KW-0012">Acyltransferase</keyword>
<keyword id="KW-0963">Cytoplasm</keyword>
<keyword id="KW-0441">Lipid A biosynthesis</keyword>
<keyword id="KW-0444">Lipid biosynthesis</keyword>
<keyword id="KW-0443">Lipid metabolism</keyword>
<keyword id="KW-0677">Repeat</keyword>
<keyword id="KW-0808">Transferase</keyword>
<organism>
    <name type="scientific">Rickettsia bellii (strain RML369-C)</name>
    <dbReference type="NCBI Taxonomy" id="336407"/>
    <lineage>
        <taxon>Bacteria</taxon>
        <taxon>Pseudomonadati</taxon>
        <taxon>Pseudomonadota</taxon>
        <taxon>Alphaproteobacteria</taxon>
        <taxon>Rickettsiales</taxon>
        <taxon>Rickettsiaceae</taxon>
        <taxon>Rickettsieae</taxon>
        <taxon>Rickettsia</taxon>
        <taxon>belli group</taxon>
    </lineage>
</organism>
<protein>
    <recommendedName>
        <fullName evidence="1">Acyl-[acyl-carrier-protein]--UDP-N-acetylglucosamine O-acyltransferase</fullName>
        <shortName evidence="1">UDP-N-acetylglucosamine acyltransferase</shortName>
        <ecNumber evidence="1">2.3.1.129</ecNumber>
    </recommendedName>
</protein>
<comment type="function">
    <text evidence="1">Involved in the biosynthesis of lipid A, a phosphorylated glycolipid that anchors the lipopolysaccharide to the outer membrane of the cell.</text>
</comment>
<comment type="catalytic activity">
    <reaction evidence="1">
        <text>a (3R)-hydroxyacyl-[ACP] + UDP-N-acetyl-alpha-D-glucosamine = a UDP-3-O-[(3R)-3-hydroxyacyl]-N-acetyl-alpha-D-glucosamine + holo-[ACP]</text>
        <dbReference type="Rhea" id="RHEA:67812"/>
        <dbReference type="Rhea" id="RHEA-COMP:9685"/>
        <dbReference type="Rhea" id="RHEA-COMP:9945"/>
        <dbReference type="ChEBI" id="CHEBI:57705"/>
        <dbReference type="ChEBI" id="CHEBI:64479"/>
        <dbReference type="ChEBI" id="CHEBI:78827"/>
        <dbReference type="ChEBI" id="CHEBI:173225"/>
        <dbReference type="EC" id="2.3.1.129"/>
    </reaction>
</comment>
<comment type="pathway">
    <text evidence="1">Glycolipid biosynthesis; lipid IV(A) biosynthesis; lipid IV(A) from (3R)-3-hydroxytetradecanoyl-[acyl-carrier-protein] and UDP-N-acetyl-alpha-D-glucosamine: step 1/6.</text>
</comment>
<comment type="subunit">
    <text evidence="1">Homotrimer.</text>
</comment>
<comment type="subcellular location">
    <subcellularLocation>
        <location evidence="1">Cytoplasm</location>
    </subcellularLocation>
</comment>
<comment type="similarity">
    <text evidence="1">Belongs to the transferase hexapeptide repeat family. LpxA subfamily.</text>
</comment>
<sequence>MSNSNIHPTSIIAEGAKLGKNVKVGPYCIIGPEVILHDNVELKSHVVIEGITEIGESTVIYPFASIGQPPQILKYNNERSNTIIGSNNIIREYVTVQAGSQGGGMITRIGNNNLFMVGVHIGHDCKIGNNVVFANYVSLAGHIEVEDYVIIGGLSAVHQYARIGKHSMIGGLSPVGADVIPFGLASGKRAVLEGLNLVGMNRKGFDKAESLNALKIVQEIFLGEGNFADRIKQAQEKYKNNTIVMQIIDFLEHGSNRSFCSFEKTMSLRGELQSNLTKQPN</sequence>
<name>LPXA_RICBR</name>
<feature type="chain" id="PRO_0000273127" description="Acyl-[acyl-carrier-protein]--UDP-N-acetylglucosamine O-acyltransferase">
    <location>
        <begin position="1"/>
        <end position="281"/>
    </location>
</feature>
<proteinExistence type="inferred from homology"/>
<evidence type="ECO:0000255" key="1">
    <source>
        <dbReference type="HAMAP-Rule" id="MF_00387"/>
    </source>
</evidence>
<dbReference type="EC" id="2.3.1.129" evidence="1"/>
<dbReference type="EMBL" id="CP000087">
    <property type="protein sequence ID" value="ABE05268.1"/>
    <property type="molecule type" value="Genomic_DNA"/>
</dbReference>
<dbReference type="RefSeq" id="WP_011477846.1">
    <property type="nucleotide sequence ID" value="NC_007940.1"/>
</dbReference>
<dbReference type="SMR" id="Q1RH96"/>
<dbReference type="KEGG" id="rbe:RBE_1187"/>
<dbReference type="eggNOG" id="COG1043">
    <property type="taxonomic scope" value="Bacteria"/>
</dbReference>
<dbReference type="HOGENOM" id="CLU_061249_0_0_5"/>
<dbReference type="OrthoDB" id="9807278at2"/>
<dbReference type="UniPathway" id="UPA00359">
    <property type="reaction ID" value="UER00477"/>
</dbReference>
<dbReference type="Proteomes" id="UP000001951">
    <property type="component" value="Chromosome"/>
</dbReference>
<dbReference type="GO" id="GO:0005737">
    <property type="term" value="C:cytoplasm"/>
    <property type="evidence" value="ECO:0007669"/>
    <property type="project" value="UniProtKB-SubCell"/>
</dbReference>
<dbReference type="GO" id="GO:0016020">
    <property type="term" value="C:membrane"/>
    <property type="evidence" value="ECO:0007669"/>
    <property type="project" value="GOC"/>
</dbReference>
<dbReference type="GO" id="GO:0008780">
    <property type="term" value="F:acyl-[acyl-carrier-protein]-UDP-N-acetylglucosamine O-acyltransferase activity"/>
    <property type="evidence" value="ECO:0007669"/>
    <property type="project" value="UniProtKB-UniRule"/>
</dbReference>
<dbReference type="GO" id="GO:0009245">
    <property type="term" value="P:lipid A biosynthetic process"/>
    <property type="evidence" value="ECO:0007669"/>
    <property type="project" value="UniProtKB-UniRule"/>
</dbReference>
<dbReference type="CDD" id="cd03351">
    <property type="entry name" value="LbH_UDP-GlcNAc_AT"/>
    <property type="match status" value="1"/>
</dbReference>
<dbReference type="Gene3D" id="2.160.10.10">
    <property type="entry name" value="Hexapeptide repeat proteins"/>
    <property type="match status" value="1"/>
</dbReference>
<dbReference type="Gene3D" id="1.20.1180.10">
    <property type="entry name" value="Udp N-acetylglucosamine O-acyltransferase, C-terminal domain"/>
    <property type="match status" value="1"/>
</dbReference>
<dbReference type="HAMAP" id="MF_00387">
    <property type="entry name" value="LpxA"/>
    <property type="match status" value="1"/>
</dbReference>
<dbReference type="InterPro" id="IPR029098">
    <property type="entry name" value="Acetyltransf_C"/>
</dbReference>
<dbReference type="InterPro" id="IPR037157">
    <property type="entry name" value="Acetyltransf_C_sf"/>
</dbReference>
<dbReference type="InterPro" id="IPR001451">
    <property type="entry name" value="Hexapep"/>
</dbReference>
<dbReference type="InterPro" id="IPR018357">
    <property type="entry name" value="Hexapep_transf_CS"/>
</dbReference>
<dbReference type="InterPro" id="IPR010137">
    <property type="entry name" value="Lipid_A_LpxA"/>
</dbReference>
<dbReference type="InterPro" id="IPR011004">
    <property type="entry name" value="Trimer_LpxA-like_sf"/>
</dbReference>
<dbReference type="NCBIfam" id="TIGR01852">
    <property type="entry name" value="lipid_A_lpxA"/>
    <property type="match status" value="1"/>
</dbReference>
<dbReference type="NCBIfam" id="NF003657">
    <property type="entry name" value="PRK05289.1"/>
    <property type="match status" value="1"/>
</dbReference>
<dbReference type="PANTHER" id="PTHR43480">
    <property type="entry name" value="ACYL-[ACYL-CARRIER-PROTEIN]--UDP-N-ACETYLGLUCOSAMINE O-ACYLTRANSFERASE"/>
    <property type="match status" value="1"/>
</dbReference>
<dbReference type="PANTHER" id="PTHR43480:SF1">
    <property type="entry name" value="ACYL-[ACYL-CARRIER-PROTEIN]--UDP-N-ACETYLGLUCOSAMINE O-ACYLTRANSFERASE, MITOCHONDRIAL-RELATED"/>
    <property type="match status" value="1"/>
</dbReference>
<dbReference type="Pfam" id="PF13720">
    <property type="entry name" value="Acetyltransf_11"/>
    <property type="match status" value="1"/>
</dbReference>
<dbReference type="Pfam" id="PF00132">
    <property type="entry name" value="Hexapep"/>
    <property type="match status" value="2"/>
</dbReference>
<dbReference type="PIRSF" id="PIRSF000456">
    <property type="entry name" value="UDP-GlcNAc_acltr"/>
    <property type="match status" value="1"/>
</dbReference>
<dbReference type="SUPFAM" id="SSF51161">
    <property type="entry name" value="Trimeric LpxA-like enzymes"/>
    <property type="match status" value="1"/>
</dbReference>
<dbReference type="PROSITE" id="PS00101">
    <property type="entry name" value="HEXAPEP_TRANSFERASES"/>
    <property type="match status" value="1"/>
</dbReference>
<reference key="1">
    <citation type="journal article" date="2006" name="PLoS Genet.">
        <title>Genome sequence of Rickettsia bellii illuminates the role of amoebae in gene exchanges between intracellular pathogens.</title>
        <authorList>
            <person name="Ogata H."/>
            <person name="La Scola B."/>
            <person name="Audic S."/>
            <person name="Renesto P."/>
            <person name="Blanc G."/>
            <person name="Robert C."/>
            <person name="Fournier P.-E."/>
            <person name="Claverie J.-M."/>
            <person name="Raoult D."/>
        </authorList>
    </citation>
    <scope>NUCLEOTIDE SEQUENCE [LARGE SCALE GENOMIC DNA]</scope>
    <source>
        <strain>RML369-C</strain>
    </source>
</reference>
<accession>Q1RH96</accession>